<proteinExistence type="inferred from homology"/>
<feature type="chain" id="PRO_0000266980" description="Probable GTP-binding protein EngB">
    <location>
        <begin position="1"/>
        <end position="200"/>
    </location>
</feature>
<feature type="domain" description="EngB-type G" evidence="1">
    <location>
        <begin position="23"/>
        <end position="197"/>
    </location>
</feature>
<feature type="binding site" evidence="1">
    <location>
        <begin position="31"/>
        <end position="38"/>
    </location>
    <ligand>
        <name>GTP</name>
        <dbReference type="ChEBI" id="CHEBI:37565"/>
    </ligand>
</feature>
<feature type="binding site" evidence="1">
    <location>
        <position position="38"/>
    </location>
    <ligand>
        <name>Mg(2+)</name>
        <dbReference type="ChEBI" id="CHEBI:18420"/>
    </ligand>
</feature>
<feature type="binding site" evidence="1">
    <location>
        <begin position="58"/>
        <end position="62"/>
    </location>
    <ligand>
        <name>GTP</name>
        <dbReference type="ChEBI" id="CHEBI:37565"/>
    </ligand>
</feature>
<feature type="binding site" evidence="1">
    <location>
        <position position="60"/>
    </location>
    <ligand>
        <name>Mg(2+)</name>
        <dbReference type="ChEBI" id="CHEBI:18420"/>
    </ligand>
</feature>
<feature type="binding site" evidence="1">
    <location>
        <begin position="83"/>
        <end position="86"/>
    </location>
    <ligand>
        <name>GTP</name>
        <dbReference type="ChEBI" id="CHEBI:37565"/>
    </ligand>
</feature>
<feature type="binding site" evidence="1">
    <location>
        <begin position="153"/>
        <end position="156"/>
    </location>
    <ligand>
        <name>GTP</name>
        <dbReference type="ChEBI" id="CHEBI:37565"/>
    </ligand>
</feature>
<feature type="binding site" evidence="1">
    <location>
        <begin position="175"/>
        <end position="177"/>
    </location>
    <ligand>
        <name>GTP</name>
        <dbReference type="ChEBI" id="CHEBI:37565"/>
    </ligand>
</feature>
<protein>
    <recommendedName>
        <fullName evidence="1">Probable GTP-binding protein EngB</fullName>
    </recommendedName>
</protein>
<accession>Q7M7V3</accession>
<keyword id="KW-0131">Cell cycle</keyword>
<keyword id="KW-0132">Cell division</keyword>
<keyword id="KW-0342">GTP-binding</keyword>
<keyword id="KW-0460">Magnesium</keyword>
<keyword id="KW-0479">Metal-binding</keyword>
<keyword id="KW-0547">Nucleotide-binding</keyword>
<keyword id="KW-1185">Reference proteome</keyword>
<keyword id="KW-0717">Septation</keyword>
<reference key="1">
    <citation type="journal article" date="2003" name="Proc. Natl. Acad. Sci. U.S.A.">
        <title>Complete genome sequence and analysis of Wolinella succinogenes.</title>
        <authorList>
            <person name="Baar C."/>
            <person name="Eppinger M."/>
            <person name="Raddatz G."/>
            <person name="Simon J."/>
            <person name="Lanz C."/>
            <person name="Klimmek O."/>
            <person name="Nandakumar R."/>
            <person name="Gross R."/>
            <person name="Rosinus A."/>
            <person name="Keller H."/>
            <person name="Jagtap P."/>
            <person name="Linke B."/>
            <person name="Meyer F."/>
            <person name="Lederer H."/>
            <person name="Schuster S.C."/>
        </authorList>
    </citation>
    <scope>NUCLEOTIDE SEQUENCE [LARGE SCALE GENOMIC DNA]</scope>
    <source>
        <strain>ATCC 29543 / DSM 1740 / CCUG 13145 / JCM 31913 / LMG 7466 / NCTC 11488 / FDC 602W</strain>
    </source>
</reference>
<organism>
    <name type="scientific">Wolinella succinogenes (strain ATCC 29543 / DSM 1740 / CCUG 13145 / JCM 31913 / LMG 7466 / NCTC 11488 / FDC 602W)</name>
    <name type="common">Vibrio succinogenes</name>
    <dbReference type="NCBI Taxonomy" id="273121"/>
    <lineage>
        <taxon>Bacteria</taxon>
        <taxon>Pseudomonadati</taxon>
        <taxon>Campylobacterota</taxon>
        <taxon>Epsilonproteobacteria</taxon>
        <taxon>Campylobacterales</taxon>
        <taxon>Helicobacteraceae</taxon>
        <taxon>Wolinella</taxon>
    </lineage>
</organism>
<sequence>MITVVESSFLTSASALSQTPPPKNSEVVFIGRSNVGKSTLINLIVDSKGLAKSSSTPGKTQLINYFETIWKRGEERIPLWLVDLPGFGYAKVSKEMRKDWGEKLIHFLQERRSIKLFVQLIDARHPDLAIDAEAWAMIGAIKRGDQKVIRVFTKMDKLNRNDQKKLQQRYPDACFTAMLGKEGIASVRERVLKDVLGEEA</sequence>
<evidence type="ECO:0000255" key="1">
    <source>
        <dbReference type="HAMAP-Rule" id="MF_00321"/>
    </source>
</evidence>
<name>ENGB_WOLSU</name>
<gene>
    <name evidence="1" type="primary">engB</name>
    <name type="ordered locus">WS2065</name>
</gene>
<dbReference type="EMBL" id="BX571662">
    <property type="protein sequence ID" value="CAE11065.1"/>
    <property type="molecule type" value="Genomic_DNA"/>
</dbReference>
<dbReference type="RefSeq" id="WP_011139847.1">
    <property type="nucleotide sequence ID" value="NC_005090.1"/>
</dbReference>
<dbReference type="SMR" id="Q7M7V3"/>
<dbReference type="STRING" id="273121.WS2065"/>
<dbReference type="KEGG" id="wsu:WS2065"/>
<dbReference type="eggNOG" id="COG0218">
    <property type="taxonomic scope" value="Bacteria"/>
</dbReference>
<dbReference type="HOGENOM" id="CLU_033732_3_2_7"/>
<dbReference type="Proteomes" id="UP000000422">
    <property type="component" value="Chromosome"/>
</dbReference>
<dbReference type="GO" id="GO:0005829">
    <property type="term" value="C:cytosol"/>
    <property type="evidence" value="ECO:0007669"/>
    <property type="project" value="TreeGrafter"/>
</dbReference>
<dbReference type="GO" id="GO:0005525">
    <property type="term" value="F:GTP binding"/>
    <property type="evidence" value="ECO:0007669"/>
    <property type="project" value="UniProtKB-UniRule"/>
</dbReference>
<dbReference type="GO" id="GO:0046872">
    <property type="term" value="F:metal ion binding"/>
    <property type="evidence" value="ECO:0007669"/>
    <property type="project" value="UniProtKB-KW"/>
</dbReference>
<dbReference type="GO" id="GO:0000917">
    <property type="term" value="P:division septum assembly"/>
    <property type="evidence" value="ECO:0007669"/>
    <property type="project" value="UniProtKB-KW"/>
</dbReference>
<dbReference type="CDD" id="cd01876">
    <property type="entry name" value="YihA_EngB"/>
    <property type="match status" value="1"/>
</dbReference>
<dbReference type="Gene3D" id="3.40.50.300">
    <property type="entry name" value="P-loop containing nucleotide triphosphate hydrolases"/>
    <property type="match status" value="1"/>
</dbReference>
<dbReference type="HAMAP" id="MF_00321">
    <property type="entry name" value="GTPase_EngB"/>
    <property type="match status" value="1"/>
</dbReference>
<dbReference type="InterPro" id="IPR030393">
    <property type="entry name" value="G_ENGB_dom"/>
</dbReference>
<dbReference type="InterPro" id="IPR006073">
    <property type="entry name" value="GTP-bd"/>
</dbReference>
<dbReference type="InterPro" id="IPR019987">
    <property type="entry name" value="GTP-bd_ribosome_bio_YsxC"/>
</dbReference>
<dbReference type="InterPro" id="IPR027417">
    <property type="entry name" value="P-loop_NTPase"/>
</dbReference>
<dbReference type="NCBIfam" id="TIGR03598">
    <property type="entry name" value="GTPase_YsxC"/>
    <property type="match status" value="1"/>
</dbReference>
<dbReference type="PANTHER" id="PTHR11649:SF13">
    <property type="entry name" value="ENGB-TYPE G DOMAIN-CONTAINING PROTEIN"/>
    <property type="match status" value="1"/>
</dbReference>
<dbReference type="PANTHER" id="PTHR11649">
    <property type="entry name" value="MSS1/TRME-RELATED GTP-BINDING PROTEIN"/>
    <property type="match status" value="1"/>
</dbReference>
<dbReference type="Pfam" id="PF01926">
    <property type="entry name" value="MMR_HSR1"/>
    <property type="match status" value="1"/>
</dbReference>
<dbReference type="SUPFAM" id="SSF52540">
    <property type="entry name" value="P-loop containing nucleoside triphosphate hydrolases"/>
    <property type="match status" value="1"/>
</dbReference>
<dbReference type="PROSITE" id="PS51706">
    <property type="entry name" value="G_ENGB"/>
    <property type="match status" value="1"/>
</dbReference>
<comment type="function">
    <text evidence="1">Necessary for normal cell division and for the maintenance of normal septation.</text>
</comment>
<comment type="cofactor">
    <cofactor evidence="1">
        <name>Mg(2+)</name>
        <dbReference type="ChEBI" id="CHEBI:18420"/>
    </cofactor>
</comment>
<comment type="similarity">
    <text evidence="1">Belongs to the TRAFAC class TrmE-Era-EngA-EngB-Septin-like GTPase superfamily. EngB GTPase family.</text>
</comment>